<reference key="1">
    <citation type="journal article" date="2003" name="Arch. Microbiol.">
        <title>Gene structure and transcriptional regulation specific to the groESL operon from the psychrophilic bacterium Colwellia maris.</title>
        <authorList>
            <person name="Yamauchi S."/>
            <person name="Okuyama H."/>
            <person name="Morita E.H."/>
            <person name="Hayashi H."/>
        </authorList>
    </citation>
    <scope>NUCLEOTIDE SEQUENCE [GENOMIC DNA]</scope>
</reference>
<comment type="function">
    <text evidence="1">Together with the chaperonin GroEL, plays an essential role in assisting protein folding. The GroEL-GroES system forms a nano-cage that allows encapsulation of the non-native substrate proteins and provides a physical environment optimized to promote and accelerate protein folding. GroES binds to the apical surface of the GroEL ring, thereby capping the opening of the GroEL channel.</text>
</comment>
<comment type="subunit">
    <text evidence="1">Heptamer of 7 subunits arranged in a ring. Interacts with the chaperonin GroEL.</text>
</comment>
<comment type="subcellular location">
    <subcellularLocation>
        <location evidence="1">Cytoplasm</location>
    </subcellularLocation>
</comment>
<comment type="similarity">
    <text evidence="1">Belongs to the GroES chaperonin family.</text>
</comment>
<accession>Q93GT9</accession>
<evidence type="ECO:0000255" key="1">
    <source>
        <dbReference type="HAMAP-Rule" id="MF_00580"/>
    </source>
</evidence>
<keyword id="KW-0143">Chaperone</keyword>
<keyword id="KW-0963">Cytoplasm</keyword>
<organism>
    <name type="scientific">Colwellia maris</name>
    <dbReference type="NCBI Taxonomy" id="77524"/>
    <lineage>
        <taxon>Bacteria</taxon>
        <taxon>Pseudomonadati</taxon>
        <taxon>Pseudomonadota</taxon>
        <taxon>Gammaproteobacteria</taxon>
        <taxon>Alteromonadales</taxon>
        <taxon>Colwelliaceae</taxon>
        <taxon>Colwellia</taxon>
    </lineage>
</organism>
<protein>
    <recommendedName>
        <fullName evidence="1">Co-chaperonin GroES</fullName>
    </recommendedName>
    <alternativeName>
        <fullName evidence="1">10 kDa chaperonin</fullName>
    </alternativeName>
    <alternativeName>
        <fullName evidence="1">Chaperonin-10</fullName>
        <shortName evidence="1">Cpn10</shortName>
    </alternativeName>
</protein>
<name>CH10_COLMA</name>
<gene>
    <name evidence="1" type="primary">groES</name>
    <name evidence="1" type="synonym">groS</name>
</gene>
<feature type="chain" id="PRO_0000174740" description="Co-chaperonin GroES">
    <location>
        <begin position="1"/>
        <end position="96"/>
    </location>
</feature>
<proteinExistence type="inferred from homology"/>
<sequence length="96" mass="10392">MSIRPLHDRVIVKRKDAESKSEGGIVLMGSATEKSTRAEVIAVGNGRILENGEVRPLDVKVGDQVIFSEGYGVKTEKIDGEEVLILSESDILAIVE</sequence>
<dbReference type="EMBL" id="AB073221">
    <property type="protein sequence ID" value="BAB70475.1"/>
    <property type="molecule type" value="Genomic_DNA"/>
</dbReference>
<dbReference type="SMR" id="Q93GT9"/>
<dbReference type="GO" id="GO:0005737">
    <property type="term" value="C:cytoplasm"/>
    <property type="evidence" value="ECO:0007669"/>
    <property type="project" value="UniProtKB-SubCell"/>
</dbReference>
<dbReference type="GO" id="GO:0005524">
    <property type="term" value="F:ATP binding"/>
    <property type="evidence" value="ECO:0007669"/>
    <property type="project" value="InterPro"/>
</dbReference>
<dbReference type="GO" id="GO:0046872">
    <property type="term" value="F:metal ion binding"/>
    <property type="evidence" value="ECO:0007669"/>
    <property type="project" value="TreeGrafter"/>
</dbReference>
<dbReference type="GO" id="GO:0044183">
    <property type="term" value="F:protein folding chaperone"/>
    <property type="evidence" value="ECO:0007669"/>
    <property type="project" value="InterPro"/>
</dbReference>
<dbReference type="GO" id="GO:0051087">
    <property type="term" value="F:protein-folding chaperone binding"/>
    <property type="evidence" value="ECO:0007669"/>
    <property type="project" value="TreeGrafter"/>
</dbReference>
<dbReference type="GO" id="GO:0051082">
    <property type="term" value="F:unfolded protein binding"/>
    <property type="evidence" value="ECO:0007669"/>
    <property type="project" value="TreeGrafter"/>
</dbReference>
<dbReference type="GO" id="GO:0051085">
    <property type="term" value="P:chaperone cofactor-dependent protein refolding"/>
    <property type="evidence" value="ECO:0007669"/>
    <property type="project" value="TreeGrafter"/>
</dbReference>
<dbReference type="CDD" id="cd00320">
    <property type="entry name" value="cpn10"/>
    <property type="match status" value="1"/>
</dbReference>
<dbReference type="FunFam" id="2.30.33.40:FF:000001">
    <property type="entry name" value="10 kDa chaperonin"/>
    <property type="match status" value="1"/>
</dbReference>
<dbReference type="Gene3D" id="2.30.33.40">
    <property type="entry name" value="GroES chaperonin"/>
    <property type="match status" value="1"/>
</dbReference>
<dbReference type="HAMAP" id="MF_00580">
    <property type="entry name" value="CH10"/>
    <property type="match status" value="1"/>
</dbReference>
<dbReference type="InterPro" id="IPR020818">
    <property type="entry name" value="Chaperonin_GroES"/>
</dbReference>
<dbReference type="InterPro" id="IPR037124">
    <property type="entry name" value="Chaperonin_GroES_sf"/>
</dbReference>
<dbReference type="InterPro" id="IPR018369">
    <property type="entry name" value="Chaprnonin_Cpn10_CS"/>
</dbReference>
<dbReference type="InterPro" id="IPR011032">
    <property type="entry name" value="GroES-like_sf"/>
</dbReference>
<dbReference type="NCBIfam" id="NF001526">
    <property type="entry name" value="PRK00364.1-1"/>
    <property type="match status" value="1"/>
</dbReference>
<dbReference type="NCBIfam" id="NF001527">
    <property type="entry name" value="PRK00364.1-2"/>
    <property type="match status" value="1"/>
</dbReference>
<dbReference type="NCBIfam" id="NF001531">
    <property type="entry name" value="PRK00364.2-2"/>
    <property type="match status" value="1"/>
</dbReference>
<dbReference type="PANTHER" id="PTHR10772">
    <property type="entry name" value="10 KDA HEAT SHOCK PROTEIN"/>
    <property type="match status" value="1"/>
</dbReference>
<dbReference type="PANTHER" id="PTHR10772:SF58">
    <property type="entry name" value="CO-CHAPERONIN GROES"/>
    <property type="match status" value="1"/>
</dbReference>
<dbReference type="Pfam" id="PF00166">
    <property type="entry name" value="Cpn10"/>
    <property type="match status" value="1"/>
</dbReference>
<dbReference type="PRINTS" id="PR00297">
    <property type="entry name" value="CHAPERONIN10"/>
</dbReference>
<dbReference type="SMART" id="SM00883">
    <property type="entry name" value="Cpn10"/>
    <property type="match status" value="1"/>
</dbReference>
<dbReference type="SUPFAM" id="SSF50129">
    <property type="entry name" value="GroES-like"/>
    <property type="match status" value="1"/>
</dbReference>
<dbReference type="PROSITE" id="PS00681">
    <property type="entry name" value="CHAPERONINS_CPN10"/>
    <property type="match status" value="1"/>
</dbReference>